<protein>
    <recommendedName>
        <fullName evidence="1">HTH-type transcriptional regulator SgrR</fullName>
    </recommendedName>
</protein>
<dbReference type="EMBL" id="CP000305">
    <property type="protein sequence ID" value="ABG16730.1"/>
    <property type="molecule type" value="Genomic_DNA"/>
</dbReference>
<dbReference type="EMBL" id="ACNQ01000006">
    <property type="protein sequence ID" value="EEO78183.1"/>
    <property type="molecule type" value="Genomic_DNA"/>
</dbReference>
<dbReference type="RefSeq" id="WP_002210461.1">
    <property type="nucleotide sequence ID" value="NZ_ACNQ01000006.1"/>
</dbReference>
<dbReference type="SMR" id="Q1CMQ0"/>
<dbReference type="GeneID" id="57974087"/>
<dbReference type="KEGG" id="ypn:YPN_0398"/>
<dbReference type="HOGENOM" id="CLU_017028_12_3_6"/>
<dbReference type="Proteomes" id="UP000008936">
    <property type="component" value="Chromosome"/>
</dbReference>
<dbReference type="GO" id="GO:0003677">
    <property type="term" value="F:DNA binding"/>
    <property type="evidence" value="ECO:0007669"/>
    <property type="project" value="UniProtKB-KW"/>
</dbReference>
<dbReference type="GO" id="GO:1904680">
    <property type="term" value="F:peptide transmembrane transporter activity"/>
    <property type="evidence" value="ECO:0007669"/>
    <property type="project" value="TreeGrafter"/>
</dbReference>
<dbReference type="GO" id="GO:0045892">
    <property type="term" value="P:negative regulation of DNA-templated transcription"/>
    <property type="evidence" value="ECO:0007669"/>
    <property type="project" value="UniProtKB-UniRule"/>
</dbReference>
<dbReference type="GO" id="GO:0015833">
    <property type="term" value="P:peptide transport"/>
    <property type="evidence" value="ECO:0007669"/>
    <property type="project" value="TreeGrafter"/>
</dbReference>
<dbReference type="GO" id="GO:0045893">
    <property type="term" value="P:positive regulation of DNA-templated transcription"/>
    <property type="evidence" value="ECO:0007669"/>
    <property type="project" value="UniProtKB-UniRule"/>
</dbReference>
<dbReference type="CDD" id="cd08507">
    <property type="entry name" value="PBP2_SgrR_like"/>
    <property type="match status" value="1"/>
</dbReference>
<dbReference type="FunFam" id="3.40.190.10:FF:000070">
    <property type="entry name" value="HTH-type transcriptional regulator SgrR"/>
    <property type="match status" value="1"/>
</dbReference>
<dbReference type="Gene3D" id="3.40.190.10">
    <property type="entry name" value="Periplasmic binding protein-like II"/>
    <property type="match status" value="1"/>
</dbReference>
<dbReference type="HAMAP" id="MF_01449">
    <property type="entry name" value="HTH_type_SgrR"/>
    <property type="match status" value="1"/>
</dbReference>
<dbReference type="InterPro" id="IPR039424">
    <property type="entry name" value="SBP_5"/>
</dbReference>
<dbReference type="InterPro" id="IPR000914">
    <property type="entry name" value="SBP_5_dom"/>
</dbReference>
<dbReference type="InterPro" id="IPR025370">
    <property type="entry name" value="SgrR_HTH_N"/>
</dbReference>
<dbReference type="InterPro" id="IPR023767">
    <property type="entry name" value="Tscrpt_reg_SgrR"/>
</dbReference>
<dbReference type="InterPro" id="IPR036390">
    <property type="entry name" value="WH_DNA-bd_sf"/>
</dbReference>
<dbReference type="NCBIfam" id="NF010149">
    <property type="entry name" value="PRK13626.1"/>
    <property type="match status" value="1"/>
</dbReference>
<dbReference type="PANTHER" id="PTHR30290:SF72">
    <property type="entry name" value="HTH-TYPE TRANSCRIPTIONAL REGULATOR SGRR"/>
    <property type="match status" value="1"/>
</dbReference>
<dbReference type="PANTHER" id="PTHR30290">
    <property type="entry name" value="PERIPLASMIC BINDING COMPONENT OF ABC TRANSPORTER"/>
    <property type="match status" value="1"/>
</dbReference>
<dbReference type="Pfam" id="PF00496">
    <property type="entry name" value="SBP_bac_5"/>
    <property type="match status" value="1"/>
</dbReference>
<dbReference type="Pfam" id="PF12793">
    <property type="entry name" value="SgrR_N"/>
    <property type="match status" value="1"/>
</dbReference>
<dbReference type="SUPFAM" id="SSF53850">
    <property type="entry name" value="Periplasmic binding protein-like II"/>
    <property type="match status" value="1"/>
</dbReference>
<dbReference type="SUPFAM" id="SSF46785">
    <property type="entry name" value="Winged helix' DNA-binding domain"/>
    <property type="match status" value="1"/>
</dbReference>
<proteinExistence type="inferred from homology"/>
<gene>
    <name evidence="1" type="primary">sgrR</name>
    <name type="ordered locus">YPN_0398</name>
    <name type="ORF">YP516_0407</name>
</gene>
<sequence>MSTSRLQQQFIRLWQRYNGQSTETTLQALAEVLNCSRRHVRSLLGKMQHAGWLDWQAEAGRGKRSQLIFLRSGLALQQQRAEELLEQDHIDQLVQLVGDKKAVRQMLLSQLGRSFRQGKHILRVLYYRPLENLLPGTALRRSETHMVRQIFNGLTRINEENGELEPDLSHHWQAITPLHWRFYLRPAIHFHHGRELEMSDVISSLTRLIPQPLFSHIAEVRSPTPYVIDVYLHSPDHWLPWLLGSVHAMILPQEWETQPDFHRQPIGTGPYSVIRNHHSQLKIQAFDNYFGFRALIDEVNIWVLPELSEELVYSGVQLQADDTGKNELESRLEEGCYFLLFDQRSPQACTPEIRRWLCELITPIALLSHAAPFYQRYWSPAYGMLPRWHHNRLTTQEPKPEGLNELTLTFYSEHSEFDAISQTLTQLLAAQGVTLKIQVLDYTRWYQGDAQSDIWLGSANFYLPLEFSLFATLYEMPLLQHCLSEELHQDIESWRNNTLLMADWSQRLVSQHQFHPLFHHWLELYGQHSMRGVRMNTLGWFDFKSAWFTPPEA</sequence>
<organism>
    <name type="scientific">Yersinia pestis bv. Antiqua (strain Nepal516)</name>
    <dbReference type="NCBI Taxonomy" id="377628"/>
    <lineage>
        <taxon>Bacteria</taxon>
        <taxon>Pseudomonadati</taxon>
        <taxon>Pseudomonadota</taxon>
        <taxon>Gammaproteobacteria</taxon>
        <taxon>Enterobacterales</taxon>
        <taxon>Yersiniaceae</taxon>
        <taxon>Yersinia</taxon>
    </lineage>
</organism>
<name>SGRR_YERPN</name>
<feature type="chain" id="PRO_0000309259" description="HTH-type transcriptional regulator SgrR">
    <location>
        <begin position="1"/>
        <end position="553"/>
    </location>
</feature>
<feature type="domain" description="HTH marR-type" evidence="1">
    <location>
        <begin position="1"/>
        <end position="113"/>
    </location>
</feature>
<feature type="DNA-binding region" description="H-T-H motif" evidence="1">
    <location>
        <begin position="26"/>
        <end position="49"/>
    </location>
</feature>
<feature type="region of interest" description="Solute-binding" evidence="1">
    <location>
        <begin position="163"/>
        <end position="494"/>
    </location>
</feature>
<reference key="1">
    <citation type="journal article" date="2006" name="J. Bacteriol.">
        <title>Complete genome sequence of Yersinia pestis strains Antiqua and Nepal516: evidence of gene reduction in an emerging pathogen.</title>
        <authorList>
            <person name="Chain P.S.G."/>
            <person name="Hu P."/>
            <person name="Malfatti S.A."/>
            <person name="Radnedge L."/>
            <person name="Larimer F."/>
            <person name="Vergez L.M."/>
            <person name="Worsham P."/>
            <person name="Chu M.C."/>
            <person name="Andersen G.L."/>
        </authorList>
    </citation>
    <scope>NUCLEOTIDE SEQUENCE [LARGE SCALE GENOMIC DNA]</scope>
    <source>
        <strain>Nepal516</strain>
    </source>
</reference>
<reference key="2">
    <citation type="submission" date="2009-04" db="EMBL/GenBank/DDBJ databases">
        <title>Yersinia pestis Nepal516A whole genome shotgun sequencing project.</title>
        <authorList>
            <person name="Plunkett G. III"/>
            <person name="Anderson B.D."/>
            <person name="Baumler D.J."/>
            <person name="Burland V."/>
            <person name="Cabot E.L."/>
            <person name="Glasner J.D."/>
            <person name="Mau B."/>
            <person name="Neeno-Eckwall E."/>
            <person name="Perna N.T."/>
            <person name="Munk A.C."/>
            <person name="Tapia R."/>
            <person name="Green L.D."/>
            <person name="Rogers Y.C."/>
            <person name="Detter J.C."/>
            <person name="Bruce D.C."/>
            <person name="Brettin T.S."/>
        </authorList>
    </citation>
    <scope>NUCLEOTIDE SEQUENCE [LARGE SCALE GENOMIC DNA]</scope>
    <source>
        <strain>Nepal516</strain>
    </source>
</reference>
<evidence type="ECO:0000255" key="1">
    <source>
        <dbReference type="HAMAP-Rule" id="MF_01449"/>
    </source>
</evidence>
<keyword id="KW-0010">Activator</keyword>
<keyword id="KW-0238">DNA-binding</keyword>
<keyword id="KW-0678">Repressor</keyword>
<keyword id="KW-0804">Transcription</keyword>
<keyword id="KW-0805">Transcription regulation</keyword>
<comment type="function">
    <text evidence="1">Activates the small RNA gene sgrS under glucose-phosphate stress conditions as well as yfdZ. Represses its own transcription under both stress and non-stress conditions. Might act as a sensor of the intracellular accumulation of phosphoglucose by binding these molecules in its C-terminal solute-binding domain.</text>
</comment>
<accession>Q1CMQ0</accession>
<accession>C4GNV1</accession>